<keyword id="KW-0004">4Fe-4S</keyword>
<keyword id="KW-0997">Cell inner membrane</keyword>
<keyword id="KW-1003">Cell membrane</keyword>
<keyword id="KW-0249">Electron transport</keyword>
<keyword id="KW-0408">Iron</keyword>
<keyword id="KW-0411">Iron-sulfur</keyword>
<keyword id="KW-0472">Membrane</keyword>
<keyword id="KW-0479">Metal-binding</keyword>
<keyword id="KW-1185">Reference proteome</keyword>
<keyword id="KW-0677">Repeat</keyword>
<keyword id="KW-1278">Translocase</keyword>
<keyword id="KW-0813">Transport</keyword>
<proteinExistence type="inferred from homology"/>
<gene>
    <name evidence="1" type="primary">rsxB</name>
    <name type="ordered locus">EC55989_1796</name>
</gene>
<dbReference type="EC" id="7.-.-.-" evidence="1"/>
<dbReference type="EMBL" id="CU928145">
    <property type="protein sequence ID" value="CAU97648.1"/>
    <property type="molecule type" value="Genomic_DNA"/>
</dbReference>
<dbReference type="RefSeq" id="WP_000991809.1">
    <property type="nucleotide sequence ID" value="NC_011748.1"/>
</dbReference>
<dbReference type="GeneID" id="93775780"/>
<dbReference type="KEGG" id="eck:EC55989_1796"/>
<dbReference type="HOGENOM" id="CLU_063448_2_0_6"/>
<dbReference type="Proteomes" id="UP000000746">
    <property type="component" value="Chromosome"/>
</dbReference>
<dbReference type="GO" id="GO:0005886">
    <property type="term" value="C:plasma membrane"/>
    <property type="evidence" value="ECO:0007669"/>
    <property type="project" value="UniProtKB-SubCell"/>
</dbReference>
<dbReference type="GO" id="GO:0051539">
    <property type="term" value="F:4 iron, 4 sulfur cluster binding"/>
    <property type="evidence" value="ECO:0007669"/>
    <property type="project" value="UniProtKB-UniRule"/>
</dbReference>
<dbReference type="GO" id="GO:0009055">
    <property type="term" value="F:electron transfer activity"/>
    <property type="evidence" value="ECO:0007669"/>
    <property type="project" value="InterPro"/>
</dbReference>
<dbReference type="GO" id="GO:0046872">
    <property type="term" value="F:metal ion binding"/>
    <property type="evidence" value="ECO:0007669"/>
    <property type="project" value="UniProtKB-KW"/>
</dbReference>
<dbReference type="GO" id="GO:0022900">
    <property type="term" value="P:electron transport chain"/>
    <property type="evidence" value="ECO:0007669"/>
    <property type="project" value="UniProtKB-UniRule"/>
</dbReference>
<dbReference type="FunFam" id="1.10.15.40:FF:000001">
    <property type="entry name" value="Ion-translocating oxidoreductase complex subunit B"/>
    <property type="match status" value="1"/>
</dbReference>
<dbReference type="Gene3D" id="3.30.70.20">
    <property type="match status" value="1"/>
</dbReference>
<dbReference type="Gene3D" id="1.10.15.40">
    <property type="entry name" value="Electron transport complex subunit B, putative Fe-S cluster"/>
    <property type="match status" value="1"/>
</dbReference>
<dbReference type="HAMAP" id="MF_00463">
    <property type="entry name" value="RsxB_RnfB"/>
    <property type="match status" value="1"/>
</dbReference>
<dbReference type="InterPro" id="IPR007202">
    <property type="entry name" value="4Fe-4S_dom"/>
</dbReference>
<dbReference type="InterPro" id="IPR017896">
    <property type="entry name" value="4Fe4S_Fe-S-bd"/>
</dbReference>
<dbReference type="InterPro" id="IPR017900">
    <property type="entry name" value="4Fe4S_Fe_S_CS"/>
</dbReference>
<dbReference type="InterPro" id="IPR050395">
    <property type="entry name" value="4Fe4S_Ferredoxin_RnfB"/>
</dbReference>
<dbReference type="InterPro" id="IPR010207">
    <property type="entry name" value="Elect_transpt_cplx_RnfB/RsxB"/>
</dbReference>
<dbReference type="InterPro" id="IPR016463">
    <property type="entry name" value="RnfB/RsxB_Proteobac"/>
</dbReference>
<dbReference type="NCBIfam" id="NF003475">
    <property type="entry name" value="PRK05113.1"/>
    <property type="match status" value="1"/>
</dbReference>
<dbReference type="NCBIfam" id="TIGR01944">
    <property type="entry name" value="rnfB"/>
    <property type="match status" value="1"/>
</dbReference>
<dbReference type="PANTHER" id="PTHR43560">
    <property type="entry name" value="ION-TRANSLOCATING OXIDOREDUCTASE COMPLEX SUBUNIT B"/>
    <property type="match status" value="1"/>
</dbReference>
<dbReference type="PANTHER" id="PTHR43560:SF1">
    <property type="entry name" value="ION-TRANSLOCATING OXIDOREDUCTASE COMPLEX SUBUNIT B"/>
    <property type="match status" value="1"/>
</dbReference>
<dbReference type="Pfam" id="PF14697">
    <property type="entry name" value="Fer4_21"/>
    <property type="match status" value="1"/>
</dbReference>
<dbReference type="Pfam" id="PF04060">
    <property type="entry name" value="FeS"/>
    <property type="match status" value="1"/>
</dbReference>
<dbReference type="PIRSF" id="PIRSF005784">
    <property type="entry name" value="Elect_transpt_RnfB"/>
    <property type="match status" value="1"/>
</dbReference>
<dbReference type="SUPFAM" id="SSF54862">
    <property type="entry name" value="4Fe-4S ferredoxins"/>
    <property type="match status" value="1"/>
</dbReference>
<dbReference type="PROSITE" id="PS51656">
    <property type="entry name" value="4FE4S"/>
    <property type="match status" value="1"/>
</dbReference>
<dbReference type="PROSITE" id="PS00198">
    <property type="entry name" value="4FE4S_FER_1"/>
    <property type="match status" value="2"/>
</dbReference>
<dbReference type="PROSITE" id="PS51379">
    <property type="entry name" value="4FE4S_FER_2"/>
    <property type="match status" value="2"/>
</dbReference>
<organism>
    <name type="scientific">Escherichia coli (strain 55989 / EAEC)</name>
    <dbReference type="NCBI Taxonomy" id="585055"/>
    <lineage>
        <taxon>Bacteria</taxon>
        <taxon>Pseudomonadati</taxon>
        <taxon>Pseudomonadota</taxon>
        <taxon>Gammaproteobacteria</taxon>
        <taxon>Enterobacterales</taxon>
        <taxon>Enterobacteriaceae</taxon>
        <taxon>Escherichia</taxon>
    </lineage>
</organism>
<evidence type="ECO:0000255" key="1">
    <source>
        <dbReference type="HAMAP-Rule" id="MF_00463"/>
    </source>
</evidence>
<comment type="function">
    <text evidence="1">Part of a membrane-bound complex that couples electron transfer with translocation of ions across the membrane. Required to maintain the reduced state of SoxR.</text>
</comment>
<comment type="cofactor">
    <cofactor evidence="1">
        <name>[4Fe-4S] cluster</name>
        <dbReference type="ChEBI" id="CHEBI:49883"/>
    </cofactor>
    <text evidence="1">Binds 3 [4Fe-4S] clusters.</text>
</comment>
<comment type="subunit">
    <text evidence="1">The complex is composed of six subunits: RsxA, RsxB, RsxC, RsxD, RsxE and RsxG.</text>
</comment>
<comment type="subcellular location">
    <subcellularLocation>
        <location evidence="1">Cell inner membrane</location>
    </subcellularLocation>
</comment>
<comment type="similarity">
    <text evidence="1">Belongs to the 4Fe4S bacterial-type ferredoxin family. RnfB subfamily.</text>
</comment>
<accession>B7L5I1</accession>
<protein>
    <recommendedName>
        <fullName evidence="1">Ion-translocating oxidoreductase complex subunit B</fullName>
        <ecNumber evidence="1">7.-.-.-</ecNumber>
    </recommendedName>
    <alternativeName>
        <fullName evidence="1">Rsx electron transport complex subunit B</fullName>
    </alternativeName>
</protein>
<feature type="chain" id="PRO_1000194474" description="Ion-translocating oxidoreductase complex subunit B">
    <location>
        <begin position="1"/>
        <end position="192"/>
    </location>
</feature>
<feature type="domain" description="4Fe-4S" evidence="1">
    <location>
        <begin position="32"/>
        <end position="91"/>
    </location>
</feature>
<feature type="domain" description="4Fe-4S ferredoxin-type 1" evidence="1">
    <location>
        <begin position="108"/>
        <end position="137"/>
    </location>
</feature>
<feature type="domain" description="4Fe-4S ferredoxin-type 2" evidence="1">
    <location>
        <begin position="138"/>
        <end position="167"/>
    </location>
</feature>
<feature type="region of interest" description="Hydrophobic" evidence="1">
    <location>
        <begin position="1"/>
        <end position="26"/>
    </location>
</feature>
<feature type="binding site" evidence="1">
    <location>
        <position position="49"/>
    </location>
    <ligand>
        <name>[4Fe-4S] cluster</name>
        <dbReference type="ChEBI" id="CHEBI:49883"/>
        <label>1</label>
    </ligand>
</feature>
<feature type="binding site" evidence="1">
    <location>
        <position position="52"/>
    </location>
    <ligand>
        <name>[4Fe-4S] cluster</name>
        <dbReference type="ChEBI" id="CHEBI:49883"/>
        <label>1</label>
    </ligand>
</feature>
<feature type="binding site" evidence="1">
    <location>
        <position position="57"/>
    </location>
    <ligand>
        <name>[4Fe-4S] cluster</name>
        <dbReference type="ChEBI" id="CHEBI:49883"/>
        <label>1</label>
    </ligand>
</feature>
<feature type="binding site" evidence="1">
    <location>
        <position position="74"/>
    </location>
    <ligand>
        <name>[4Fe-4S] cluster</name>
        <dbReference type="ChEBI" id="CHEBI:49883"/>
        <label>1</label>
    </ligand>
</feature>
<feature type="binding site" evidence="1">
    <location>
        <position position="117"/>
    </location>
    <ligand>
        <name>[4Fe-4S] cluster</name>
        <dbReference type="ChEBI" id="CHEBI:49883"/>
        <label>2</label>
    </ligand>
</feature>
<feature type="binding site" evidence="1">
    <location>
        <position position="120"/>
    </location>
    <ligand>
        <name>[4Fe-4S] cluster</name>
        <dbReference type="ChEBI" id="CHEBI:49883"/>
        <label>2</label>
    </ligand>
</feature>
<feature type="binding site" evidence="1">
    <location>
        <position position="123"/>
    </location>
    <ligand>
        <name>[4Fe-4S] cluster</name>
        <dbReference type="ChEBI" id="CHEBI:49883"/>
        <label>2</label>
    </ligand>
</feature>
<feature type="binding site" evidence="1">
    <location>
        <position position="127"/>
    </location>
    <ligand>
        <name>[4Fe-4S] cluster</name>
        <dbReference type="ChEBI" id="CHEBI:49883"/>
        <label>3</label>
    </ligand>
</feature>
<feature type="binding site" evidence="1">
    <location>
        <position position="147"/>
    </location>
    <ligand>
        <name>[4Fe-4S] cluster</name>
        <dbReference type="ChEBI" id="CHEBI:49883"/>
        <label>3</label>
    </ligand>
</feature>
<feature type="binding site" evidence="1">
    <location>
        <position position="150"/>
    </location>
    <ligand>
        <name>[4Fe-4S] cluster</name>
        <dbReference type="ChEBI" id="CHEBI:49883"/>
        <label>3</label>
    </ligand>
</feature>
<feature type="binding site" evidence="1">
    <location>
        <position position="153"/>
    </location>
    <ligand>
        <name>[4Fe-4S] cluster</name>
        <dbReference type="ChEBI" id="CHEBI:49883"/>
        <label>3</label>
    </ligand>
</feature>
<feature type="binding site" evidence="1">
    <location>
        <position position="157"/>
    </location>
    <ligand>
        <name>[4Fe-4S] cluster</name>
        <dbReference type="ChEBI" id="CHEBI:49883"/>
        <label>2</label>
    </ligand>
</feature>
<sequence length="192" mass="20544">MNAIWIAVAAVSLLGLAFGAILGYASRRFAVEDDPVVEKIDEILPQSQCGQCGYPGCRPYAEAISCNGEKINRCAPGGEAVMLKIAELLNVEPQPLDGEAQELTPARMVAVIDENNCIGCTKCIQACPVDAIVGATRAMHTVMSDLCTGCNLCVDPCPTHCISLQPVAETPDSWKWDLNTIPVRIIPVEHHA</sequence>
<name>RSXB_ECO55</name>
<reference key="1">
    <citation type="journal article" date="2009" name="PLoS Genet.">
        <title>Organised genome dynamics in the Escherichia coli species results in highly diverse adaptive paths.</title>
        <authorList>
            <person name="Touchon M."/>
            <person name="Hoede C."/>
            <person name="Tenaillon O."/>
            <person name="Barbe V."/>
            <person name="Baeriswyl S."/>
            <person name="Bidet P."/>
            <person name="Bingen E."/>
            <person name="Bonacorsi S."/>
            <person name="Bouchier C."/>
            <person name="Bouvet O."/>
            <person name="Calteau A."/>
            <person name="Chiapello H."/>
            <person name="Clermont O."/>
            <person name="Cruveiller S."/>
            <person name="Danchin A."/>
            <person name="Diard M."/>
            <person name="Dossat C."/>
            <person name="Karoui M.E."/>
            <person name="Frapy E."/>
            <person name="Garry L."/>
            <person name="Ghigo J.M."/>
            <person name="Gilles A.M."/>
            <person name="Johnson J."/>
            <person name="Le Bouguenec C."/>
            <person name="Lescat M."/>
            <person name="Mangenot S."/>
            <person name="Martinez-Jehanne V."/>
            <person name="Matic I."/>
            <person name="Nassif X."/>
            <person name="Oztas S."/>
            <person name="Petit M.A."/>
            <person name="Pichon C."/>
            <person name="Rouy Z."/>
            <person name="Ruf C.S."/>
            <person name="Schneider D."/>
            <person name="Tourret J."/>
            <person name="Vacherie B."/>
            <person name="Vallenet D."/>
            <person name="Medigue C."/>
            <person name="Rocha E.P.C."/>
            <person name="Denamur E."/>
        </authorList>
    </citation>
    <scope>NUCLEOTIDE SEQUENCE [LARGE SCALE GENOMIC DNA]</scope>
    <source>
        <strain>55989 / EAEC</strain>
    </source>
</reference>